<keyword id="KW-0028">Amino-acid biosynthesis</keyword>
<keyword id="KW-0057">Aromatic amino acid biosynthesis</keyword>
<keyword id="KW-0456">Lyase</keyword>
<keyword id="KW-0663">Pyridoxal phosphate</keyword>
<keyword id="KW-1185">Reference proteome</keyword>
<keyword id="KW-0822">Tryptophan biosynthesis</keyword>
<sequence>MMTKLDPYFGEYGGMFVPQILMPALKQLEAAFVDAQNDPSFQAEFTDLLKNYAGRPTALTLTRNLSPNPLVKIYLKREDLLHGGAHKTNQVLGQALLAKRMGKKEIIAETGAGQHGVATALACALLGLKCKVYMGAKDVERQSPNVFRMRLMGAEVIPVTSGSATLKDACNEAMRDWSASYDKAHYLLGTAAGPHPFPTIVREFQRMIGEETKAQILEREGRLPDAVIACVGGGSNAIGMFADFIDEPSVKLIGVEPAGLGIDTPKHGAPLKHGKTGIFFGMKAPLMQDKEGQIEESYSISAGLDFPSVGPQHAHLAATGRATYESATDDEALAAFQLLARSEGIIPALESAHALAYAIKLAEAATEETLLVVNLSGRGDKDIFTVADILEKQQANNEESGNE</sequence>
<feature type="chain" id="PRO_1000018390" description="Tryptophan synthase beta chain">
    <location>
        <begin position="1"/>
        <end position="403"/>
    </location>
</feature>
<feature type="modified residue" description="N6-(pyridoxal phosphate)lysine" evidence="1">
    <location>
        <position position="87"/>
    </location>
</feature>
<reference key="1">
    <citation type="submission" date="2007-03" db="EMBL/GenBank/DDBJ databases">
        <title>Complete sequence of Shewanella loihica PV-4.</title>
        <authorList>
            <consortium name="US DOE Joint Genome Institute"/>
            <person name="Copeland A."/>
            <person name="Lucas S."/>
            <person name="Lapidus A."/>
            <person name="Barry K."/>
            <person name="Detter J.C."/>
            <person name="Glavina del Rio T."/>
            <person name="Hammon N."/>
            <person name="Israni S."/>
            <person name="Dalin E."/>
            <person name="Tice H."/>
            <person name="Pitluck S."/>
            <person name="Chain P."/>
            <person name="Malfatti S."/>
            <person name="Shin M."/>
            <person name="Vergez L."/>
            <person name="Schmutz J."/>
            <person name="Larimer F."/>
            <person name="Land M."/>
            <person name="Hauser L."/>
            <person name="Kyrpides N."/>
            <person name="Mikhailova N."/>
            <person name="Romine M.F."/>
            <person name="Serres G."/>
            <person name="Fredrickson J."/>
            <person name="Tiedje J."/>
            <person name="Richardson P."/>
        </authorList>
    </citation>
    <scope>NUCLEOTIDE SEQUENCE [LARGE SCALE GENOMIC DNA]</scope>
    <source>
        <strain>ATCC BAA-1088 / PV-4</strain>
    </source>
</reference>
<proteinExistence type="inferred from homology"/>
<evidence type="ECO:0000255" key="1">
    <source>
        <dbReference type="HAMAP-Rule" id="MF_00133"/>
    </source>
</evidence>
<protein>
    <recommendedName>
        <fullName evidence="1">Tryptophan synthase beta chain</fullName>
        <ecNumber evidence="1">4.2.1.20</ecNumber>
    </recommendedName>
</protein>
<dbReference type="EC" id="4.2.1.20" evidence="1"/>
<dbReference type="EMBL" id="CP000606">
    <property type="protein sequence ID" value="ABO24121.1"/>
    <property type="molecule type" value="Genomic_DNA"/>
</dbReference>
<dbReference type="SMR" id="A3QF73"/>
<dbReference type="STRING" id="323850.Shew_2255"/>
<dbReference type="KEGG" id="slo:Shew_2255"/>
<dbReference type="eggNOG" id="COG0133">
    <property type="taxonomic scope" value="Bacteria"/>
</dbReference>
<dbReference type="HOGENOM" id="CLU_016734_3_1_6"/>
<dbReference type="UniPathway" id="UPA00035">
    <property type="reaction ID" value="UER00044"/>
</dbReference>
<dbReference type="Proteomes" id="UP000001558">
    <property type="component" value="Chromosome"/>
</dbReference>
<dbReference type="GO" id="GO:0005737">
    <property type="term" value="C:cytoplasm"/>
    <property type="evidence" value="ECO:0007669"/>
    <property type="project" value="TreeGrafter"/>
</dbReference>
<dbReference type="GO" id="GO:0004834">
    <property type="term" value="F:tryptophan synthase activity"/>
    <property type="evidence" value="ECO:0007669"/>
    <property type="project" value="UniProtKB-UniRule"/>
</dbReference>
<dbReference type="CDD" id="cd06446">
    <property type="entry name" value="Trp-synth_B"/>
    <property type="match status" value="1"/>
</dbReference>
<dbReference type="FunFam" id="3.40.50.1100:FF:000001">
    <property type="entry name" value="Tryptophan synthase beta chain"/>
    <property type="match status" value="1"/>
</dbReference>
<dbReference type="FunFam" id="3.40.50.1100:FF:000004">
    <property type="entry name" value="Tryptophan synthase beta chain"/>
    <property type="match status" value="1"/>
</dbReference>
<dbReference type="Gene3D" id="3.40.50.1100">
    <property type="match status" value="2"/>
</dbReference>
<dbReference type="HAMAP" id="MF_00133">
    <property type="entry name" value="Trp_synth_beta"/>
    <property type="match status" value="1"/>
</dbReference>
<dbReference type="InterPro" id="IPR006653">
    <property type="entry name" value="Trp_synth_b_CS"/>
</dbReference>
<dbReference type="InterPro" id="IPR006654">
    <property type="entry name" value="Trp_synth_beta"/>
</dbReference>
<dbReference type="InterPro" id="IPR023026">
    <property type="entry name" value="Trp_synth_beta/beta-like"/>
</dbReference>
<dbReference type="InterPro" id="IPR001926">
    <property type="entry name" value="TrpB-like_PALP"/>
</dbReference>
<dbReference type="InterPro" id="IPR036052">
    <property type="entry name" value="TrpB-like_PALP_sf"/>
</dbReference>
<dbReference type="NCBIfam" id="TIGR00263">
    <property type="entry name" value="trpB"/>
    <property type="match status" value="1"/>
</dbReference>
<dbReference type="PANTHER" id="PTHR48077:SF3">
    <property type="entry name" value="TRYPTOPHAN SYNTHASE"/>
    <property type="match status" value="1"/>
</dbReference>
<dbReference type="PANTHER" id="PTHR48077">
    <property type="entry name" value="TRYPTOPHAN SYNTHASE-RELATED"/>
    <property type="match status" value="1"/>
</dbReference>
<dbReference type="Pfam" id="PF00291">
    <property type="entry name" value="PALP"/>
    <property type="match status" value="1"/>
</dbReference>
<dbReference type="PIRSF" id="PIRSF001413">
    <property type="entry name" value="Trp_syn_beta"/>
    <property type="match status" value="1"/>
</dbReference>
<dbReference type="SUPFAM" id="SSF53686">
    <property type="entry name" value="Tryptophan synthase beta subunit-like PLP-dependent enzymes"/>
    <property type="match status" value="1"/>
</dbReference>
<dbReference type="PROSITE" id="PS00168">
    <property type="entry name" value="TRP_SYNTHASE_BETA"/>
    <property type="match status" value="1"/>
</dbReference>
<gene>
    <name evidence="1" type="primary">trpB</name>
    <name type="ordered locus">Shew_2255</name>
</gene>
<accession>A3QF73</accession>
<name>TRPB_SHELP</name>
<organism>
    <name type="scientific">Shewanella loihica (strain ATCC BAA-1088 / PV-4)</name>
    <dbReference type="NCBI Taxonomy" id="323850"/>
    <lineage>
        <taxon>Bacteria</taxon>
        <taxon>Pseudomonadati</taxon>
        <taxon>Pseudomonadota</taxon>
        <taxon>Gammaproteobacteria</taxon>
        <taxon>Alteromonadales</taxon>
        <taxon>Shewanellaceae</taxon>
        <taxon>Shewanella</taxon>
    </lineage>
</organism>
<comment type="function">
    <text evidence="1">The beta subunit is responsible for the synthesis of L-tryptophan from indole and L-serine.</text>
</comment>
<comment type="catalytic activity">
    <reaction evidence="1">
        <text>(1S,2R)-1-C-(indol-3-yl)glycerol 3-phosphate + L-serine = D-glyceraldehyde 3-phosphate + L-tryptophan + H2O</text>
        <dbReference type="Rhea" id="RHEA:10532"/>
        <dbReference type="ChEBI" id="CHEBI:15377"/>
        <dbReference type="ChEBI" id="CHEBI:33384"/>
        <dbReference type="ChEBI" id="CHEBI:57912"/>
        <dbReference type="ChEBI" id="CHEBI:58866"/>
        <dbReference type="ChEBI" id="CHEBI:59776"/>
        <dbReference type="EC" id="4.2.1.20"/>
    </reaction>
</comment>
<comment type="cofactor">
    <cofactor evidence="1">
        <name>pyridoxal 5'-phosphate</name>
        <dbReference type="ChEBI" id="CHEBI:597326"/>
    </cofactor>
</comment>
<comment type="pathway">
    <text evidence="1">Amino-acid biosynthesis; L-tryptophan biosynthesis; L-tryptophan from chorismate: step 5/5.</text>
</comment>
<comment type="subunit">
    <text evidence="1">Tetramer of two alpha and two beta chains.</text>
</comment>
<comment type="similarity">
    <text evidence="1">Belongs to the TrpB family.</text>
</comment>